<organism>
    <name type="scientific">Sinorhizobium medicae (strain WSM419)</name>
    <name type="common">Ensifer medicae</name>
    <dbReference type="NCBI Taxonomy" id="366394"/>
    <lineage>
        <taxon>Bacteria</taxon>
        <taxon>Pseudomonadati</taxon>
        <taxon>Pseudomonadota</taxon>
        <taxon>Alphaproteobacteria</taxon>
        <taxon>Hyphomicrobiales</taxon>
        <taxon>Rhizobiaceae</taxon>
        <taxon>Sinorhizobium/Ensifer group</taxon>
        <taxon>Sinorhizobium</taxon>
    </lineage>
</organism>
<sequence>MRPEKLDAAAIAEQLHRMEGWVLAEDGGSIWKAFRFKSFAEAFAFMTQCAFAAEKLNHHPEWFNVYNKVDVTLSTHDAQGLTELDFKLAAKMDQAAEGRMPDHMK</sequence>
<keyword id="KW-0456">Lyase</keyword>
<reference key="1">
    <citation type="submission" date="2007-06" db="EMBL/GenBank/DDBJ databases">
        <title>Complete sequence of Sinorhizobium medicae WSM419 chromosome.</title>
        <authorList>
            <consortium name="US DOE Joint Genome Institute"/>
            <person name="Copeland A."/>
            <person name="Lucas S."/>
            <person name="Lapidus A."/>
            <person name="Barry K."/>
            <person name="Glavina del Rio T."/>
            <person name="Dalin E."/>
            <person name="Tice H."/>
            <person name="Pitluck S."/>
            <person name="Chain P."/>
            <person name="Malfatti S."/>
            <person name="Shin M."/>
            <person name="Vergez L."/>
            <person name="Schmutz J."/>
            <person name="Larimer F."/>
            <person name="Land M."/>
            <person name="Hauser L."/>
            <person name="Kyrpides N."/>
            <person name="Mikhailova N."/>
            <person name="Reeve W.G."/>
            <person name="Richardson P."/>
        </authorList>
    </citation>
    <scope>NUCLEOTIDE SEQUENCE [LARGE SCALE GENOMIC DNA]</scope>
    <source>
        <strain>WSM419</strain>
    </source>
</reference>
<accession>A6UE17</accession>
<comment type="catalytic activity">
    <reaction evidence="1">
        <text>(4aS,6R)-4a-hydroxy-L-erythro-5,6,7,8-tetrahydrobiopterin = (6R)-L-erythro-6,7-dihydrobiopterin + H2O</text>
        <dbReference type="Rhea" id="RHEA:11920"/>
        <dbReference type="ChEBI" id="CHEBI:15377"/>
        <dbReference type="ChEBI" id="CHEBI:15642"/>
        <dbReference type="ChEBI" id="CHEBI:43120"/>
        <dbReference type="EC" id="4.2.1.96"/>
    </reaction>
</comment>
<comment type="similarity">
    <text evidence="1">Belongs to the pterin-4-alpha-carbinolamine dehydratase family.</text>
</comment>
<evidence type="ECO:0000255" key="1">
    <source>
        <dbReference type="HAMAP-Rule" id="MF_00434"/>
    </source>
</evidence>
<feature type="chain" id="PRO_1000050464" description="Putative pterin-4-alpha-carbinolamine dehydratase">
    <location>
        <begin position="1"/>
        <end position="105"/>
    </location>
</feature>
<name>PHS_SINMW</name>
<proteinExistence type="inferred from homology"/>
<gene>
    <name type="ordered locus">Smed_3071</name>
</gene>
<dbReference type="EC" id="4.2.1.96" evidence="1"/>
<dbReference type="EMBL" id="CP000738">
    <property type="protein sequence ID" value="ABR61897.1"/>
    <property type="molecule type" value="Genomic_DNA"/>
</dbReference>
<dbReference type="RefSeq" id="WP_012067278.1">
    <property type="nucleotide sequence ID" value="NC_009636.1"/>
</dbReference>
<dbReference type="RefSeq" id="YP_001328732.1">
    <property type="nucleotide sequence ID" value="NC_009636.1"/>
</dbReference>
<dbReference type="SMR" id="A6UE17"/>
<dbReference type="STRING" id="366394.Smed_3071"/>
<dbReference type="KEGG" id="smd:Smed_3071"/>
<dbReference type="PATRIC" id="fig|366394.8.peg.6301"/>
<dbReference type="eggNOG" id="COG2154">
    <property type="taxonomic scope" value="Bacteria"/>
</dbReference>
<dbReference type="HOGENOM" id="CLU_081974_3_2_5"/>
<dbReference type="OrthoDB" id="9794987at2"/>
<dbReference type="Proteomes" id="UP000001108">
    <property type="component" value="Chromosome"/>
</dbReference>
<dbReference type="GO" id="GO:0008124">
    <property type="term" value="F:4-alpha-hydroxytetrahydrobiopterin dehydratase activity"/>
    <property type="evidence" value="ECO:0007669"/>
    <property type="project" value="UniProtKB-UniRule"/>
</dbReference>
<dbReference type="GO" id="GO:0006729">
    <property type="term" value="P:tetrahydrobiopterin biosynthetic process"/>
    <property type="evidence" value="ECO:0007669"/>
    <property type="project" value="InterPro"/>
</dbReference>
<dbReference type="CDD" id="cd00914">
    <property type="entry name" value="PCD_DCoH_subfamily_b"/>
    <property type="match status" value="1"/>
</dbReference>
<dbReference type="Gene3D" id="3.30.1360.20">
    <property type="entry name" value="Transcriptional coactivator/pterin dehydratase"/>
    <property type="match status" value="1"/>
</dbReference>
<dbReference type="HAMAP" id="MF_00434">
    <property type="entry name" value="Pterin_4_alpha"/>
    <property type="match status" value="1"/>
</dbReference>
<dbReference type="InterPro" id="IPR036428">
    <property type="entry name" value="PCD_sf"/>
</dbReference>
<dbReference type="InterPro" id="IPR001533">
    <property type="entry name" value="Pterin_deHydtase"/>
</dbReference>
<dbReference type="NCBIfam" id="NF002017">
    <property type="entry name" value="PRK00823.1-2"/>
    <property type="match status" value="1"/>
</dbReference>
<dbReference type="NCBIfam" id="NF002018">
    <property type="entry name" value="PRK00823.1-3"/>
    <property type="match status" value="1"/>
</dbReference>
<dbReference type="PANTHER" id="PTHR12599">
    <property type="entry name" value="PTERIN-4-ALPHA-CARBINOLAMINE DEHYDRATASE"/>
    <property type="match status" value="1"/>
</dbReference>
<dbReference type="PANTHER" id="PTHR12599:SF0">
    <property type="entry name" value="PTERIN-4-ALPHA-CARBINOLAMINE DEHYDRATASE"/>
    <property type="match status" value="1"/>
</dbReference>
<dbReference type="Pfam" id="PF01329">
    <property type="entry name" value="Pterin_4a"/>
    <property type="match status" value="1"/>
</dbReference>
<dbReference type="SUPFAM" id="SSF55248">
    <property type="entry name" value="PCD-like"/>
    <property type="match status" value="1"/>
</dbReference>
<protein>
    <recommendedName>
        <fullName evidence="1">Putative pterin-4-alpha-carbinolamine dehydratase</fullName>
        <shortName evidence="1">PHS</shortName>
        <ecNumber evidence="1">4.2.1.96</ecNumber>
    </recommendedName>
    <alternativeName>
        <fullName evidence="1">4-alpha-hydroxy-tetrahydropterin dehydratase</fullName>
    </alternativeName>
    <alternativeName>
        <fullName evidence="1">Pterin carbinolamine dehydratase</fullName>
        <shortName evidence="1">PCD</shortName>
    </alternativeName>
</protein>